<name>HIS1_METBU</name>
<reference key="1">
    <citation type="journal article" date="2009" name="ISME J.">
        <title>The genome sequence of the psychrophilic archaeon, Methanococcoides burtonii: the role of genome evolution in cold adaptation.</title>
        <authorList>
            <person name="Allen M.A."/>
            <person name="Lauro F.M."/>
            <person name="Williams T.J."/>
            <person name="Burg D."/>
            <person name="Siddiqui K.S."/>
            <person name="De Francisci D."/>
            <person name="Chong K.W."/>
            <person name="Pilak O."/>
            <person name="Chew H.H."/>
            <person name="De Maere M.Z."/>
            <person name="Ting L."/>
            <person name="Katrib M."/>
            <person name="Ng C."/>
            <person name="Sowers K.R."/>
            <person name="Galperin M.Y."/>
            <person name="Anderson I.J."/>
            <person name="Ivanova N."/>
            <person name="Dalin E."/>
            <person name="Martinez M."/>
            <person name="Lapidus A."/>
            <person name="Hauser L."/>
            <person name="Land M."/>
            <person name="Thomas T."/>
            <person name="Cavicchioli R."/>
        </authorList>
    </citation>
    <scope>NUCLEOTIDE SEQUENCE [LARGE SCALE GENOMIC DNA]</scope>
    <source>
        <strain>DSM 6242 / NBRC 107633 / OCM 468 / ACE-M</strain>
    </source>
</reference>
<protein>
    <recommendedName>
        <fullName evidence="1">ATP phosphoribosyltransferase</fullName>
        <shortName evidence="1">ATP-PRT</shortName>
        <shortName evidence="1">ATP-PRTase</shortName>
        <ecNumber evidence="1">2.4.2.17</ecNumber>
    </recommendedName>
</protein>
<sequence>MIRIAIPNKGRLHEPTIQMFKEAGLPVLGGSNRKLFAKTNDPEITFLFARAADIPEYVQDGAADVGITGLDLISETESDVEMLLDLKYGGADLVLAVPEESDISSANDLDGMRVATEFPGITARYFKDLGIKIDVVKVSGACEMTPHVGIADAIVDISSSGTTLVMNHLKVIEKVFSSSIYLIANHETAKTEEKIEHIKTALESVMHAKAKRYLMMNAPITVVDDLKEVLPGLAGPTIMKVESKEDIVAVHAVVDADIIFATITKLKAAGAFDILVMPIERMIP</sequence>
<feature type="chain" id="PRO_1000004471" description="ATP phosphoribosyltransferase">
    <location>
        <begin position="1"/>
        <end position="284"/>
    </location>
</feature>
<keyword id="KW-0028">Amino-acid biosynthesis</keyword>
<keyword id="KW-0067">ATP-binding</keyword>
<keyword id="KW-0963">Cytoplasm</keyword>
<keyword id="KW-0328">Glycosyltransferase</keyword>
<keyword id="KW-0368">Histidine biosynthesis</keyword>
<keyword id="KW-0460">Magnesium</keyword>
<keyword id="KW-0479">Metal-binding</keyword>
<keyword id="KW-0547">Nucleotide-binding</keyword>
<keyword id="KW-0808">Transferase</keyword>
<comment type="function">
    <text evidence="1">Catalyzes the condensation of ATP and 5-phosphoribose 1-diphosphate to form N'-(5'-phosphoribosyl)-ATP (PR-ATP). Has a crucial role in the pathway because the rate of histidine biosynthesis seems to be controlled primarily by regulation of HisG enzymatic activity.</text>
</comment>
<comment type="catalytic activity">
    <reaction evidence="1">
        <text>1-(5-phospho-beta-D-ribosyl)-ATP + diphosphate = 5-phospho-alpha-D-ribose 1-diphosphate + ATP</text>
        <dbReference type="Rhea" id="RHEA:18473"/>
        <dbReference type="ChEBI" id="CHEBI:30616"/>
        <dbReference type="ChEBI" id="CHEBI:33019"/>
        <dbReference type="ChEBI" id="CHEBI:58017"/>
        <dbReference type="ChEBI" id="CHEBI:73183"/>
        <dbReference type="EC" id="2.4.2.17"/>
    </reaction>
</comment>
<comment type="cofactor">
    <cofactor evidence="1">
        <name>Mg(2+)</name>
        <dbReference type="ChEBI" id="CHEBI:18420"/>
    </cofactor>
</comment>
<comment type="activity regulation">
    <text evidence="1">Feedback inhibited by histidine.</text>
</comment>
<comment type="pathway">
    <text evidence="1">Amino-acid biosynthesis; L-histidine biosynthesis; L-histidine from 5-phospho-alpha-D-ribose 1-diphosphate: step 1/9.</text>
</comment>
<comment type="subcellular location">
    <subcellularLocation>
        <location evidence="1">Cytoplasm</location>
    </subcellularLocation>
</comment>
<comment type="similarity">
    <text evidence="1">Belongs to the ATP phosphoribosyltransferase family. Long subfamily.</text>
</comment>
<accession>Q12WC7</accession>
<gene>
    <name evidence="1" type="primary">hisG</name>
    <name type="ordered locus">Mbur_1331</name>
</gene>
<dbReference type="EC" id="2.4.2.17" evidence="1"/>
<dbReference type="EMBL" id="CP000300">
    <property type="protein sequence ID" value="ABE52249.1"/>
    <property type="molecule type" value="Genomic_DNA"/>
</dbReference>
<dbReference type="RefSeq" id="WP_011499394.1">
    <property type="nucleotide sequence ID" value="NC_007955.1"/>
</dbReference>
<dbReference type="SMR" id="Q12WC7"/>
<dbReference type="STRING" id="259564.Mbur_1331"/>
<dbReference type="GeneID" id="3997547"/>
<dbReference type="KEGG" id="mbu:Mbur_1331"/>
<dbReference type="HOGENOM" id="CLU_038115_1_0_2"/>
<dbReference type="OrthoDB" id="33116at2157"/>
<dbReference type="UniPathway" id="UPA00031">
    <property type="reaction ID" value="UER00006"/>
</dbReference>
<dbReference type="Proteomes" id="UP000001979">
    <property type="component" value="Chromosome"/>
</dbReference>
<dbReference type="GO" id="GO:0005737">
    <property type="term" value="C:cytoplasm"/>
    <property type="evidence" value="ECO:0007669"/>
    <property type="project" value="UniProtKB-SubCell"/>
</dbReference>
<dbReference type="GO" id="GO:0005524">
    <property type="term" value="F:ATP binding"/>
    <property type="evidence" value="ECO:0007669"/>
    <property type="project" value="UniProtKB-KW"/>
</dbReference>
<dbReference type="GO" id="GO:0003879">
    <property type="term" value="F:ATP phosphoribosyltransferase activity"/>
    <property type="evidence" value="ECO:0007669"/>
    <property type="project" value="UniProtKB-UniRule"/>
</dbReference>
<dbReference type="GO" id="GO:0000287">
    <property type="term" value="F:magnesium ion binding"/>
    <property type="evidence" value="ECO:0007669"/>
    <property type="project" value="UniProtKB-UniRule"/>
</dbReference>
<dbReference type="GO" id="GO:0000105">
    <property type="term" value="P:L-histidine biosynthetic process"/>
    <property type="evidence" value="ECO:0007669"/>
    <property type="project" value="UniProtKB-UniRule"/>
</dbReference>
<dbReference type="CDD" id="cd13594">
    <property type="entry name" value="PBP2_HisGL4"/>
    <property type="match status" value="1"/>
</dbReference>
<dbReference type="FunFam" id="3.30.70.120:FF:000002">
    <property type="entry name" value="ATP phosphoribosyltransferase"/>
    <property type="match status" value="1"/>
</dbReference>
<dbReference type="FunFam" id="3.40.190.10:FF:000082">
    <property type="entry name" value="ATP phosphoribosyltransferase"/>
    <property type="match status" value="1"/>
</dbReference>
<dbReference type="Gene3D" id="3.30.70.120">
    <property type="match status" value="1"/>
</dbReference>
<dbReference type="Gene3D" id="3.40.190.10">
    <property type="entry name" value="Periplasmic binding protein-like II"/>
    <property type="match status" value="2"/>
</dbReference>
<dbReference type="HAMAP" id="MF_00079">
    <property type="entry name" value="HisG_Long"/>
    <property type="match status" value="1"/>
</dbReference>
<dbReference type="InterPro" id="IPR020621">
    <property type="entry name" value="ATP-PRT_HisG_long"/>
</dbReference>
<dbReference type="InterPro" id="IPR013820">
    <property type="entry name" value="ATP_PRibTrfase_cat"/>
</dbReference>
<dbReference type="InterPro" id="IPR018198">
    <property type="entry name" value="ATP_PRibTrfase_CS"/>
</dbReference>
<dbReference type="InterPro" id="IPR001348">
    <property type="entry name" value="ATP_PRibTrfase_HisG"/>
</dbReference>
<dbReference type="InterPro" id="IPR013115">
    <property type="entry name" value="HisG_C"/>
</dbReference>
<dbReference type="InterPro" id="IPR011322">
    <property type="entry name" value="N-reg_PII-like_a/b"/>
</dbReference>
<dbReference type="InterPro" id="IPR015867">
    <property type="entry name" value="N-reg_PII/ATP_PRibTrfase_C"/>
</dbReference>
<dbReference type="NCBIfam" id="TIGR00070">
    <property type="entry name" value="hisG"/>
    <property type="match status" value="1"/>
</dbReference>
<dbReference type="NCBIfam" id="TIGR03455">
    <property type="entry name" value="HisG_C-term"/>
    <property type="match status" value="1"/>
</dbReference>
<dbReference type="PANTHER" id="PTHR21403:SF10">
    <property type="entry name" value="ATP PHOSPHORIBOSYLTRANSFERASE"/>
    <property type="match status" value="1"/>
</dbReference>
<dbReference type="PANTHER" id="PTHR21403">
    <property type="entry name" value="ATP PHOSPHORIBOSYLTRANSFERASE ATP-PRTASE"/>
    <property type="match status" value="1"/>
</dbReference>
<dbReference type="Pfam" id="PF01634">
    <property type="entry name" value="HisG"/>
    <property type="match status" value="1"/>
</dbReference>
<dbReference type="Pfam" id="PF08029">
    <property type="entry name" value="HisG_C"/>
    <property type="match status" value="1"/>
</dbReference>
<dbReference type="SUPFAM" id="SSF54913">
    <property type="entry name" value="GlnB-like"/>
    <property type="match status" value="1"/>
</dbReference>
<dbReference type="SUPFAM" id="SSF53850">
    <property type="entry name" value="Periplasmic binding protein-like II"/>
    <property type="match status" value="1"/>
</dbReference>
<dbReference type="PROSITE" id="PS01316">
    <property type="entry name" value="ATP_P_PHORIBOSYLTR"/>
    <property type="match status" value="1"/>
</dbReference>
<proteinExistence type="inferred from homology"/>
<evidence type="ECO:0000255" key="1">
    <source>
        <dbReference type="HAMAP-Rule" id="MF_00079"/>
    </source>
</evidence>
<organism>
    <name type="scientific">Methanococcoides burtonii (strain DSM 6242 / NBRC 107633 / OCM 468 / ACE-M)</name>
    <dbReference type="NCBI Taxonomy" id="259564"/>
    <lineage>
        <taxon>Archaea</taxon>
        <taxon>Methanobacteriati</taxon>
        <taxon>Methanobacteriota</taxon>
        <taxon>Stenosarchaea group</taxon>
        <taxon>Methanomicrobia</taxon>
        <taxon>Methanosarcinales</taxon>
        <taxon>Methanosarcinaceae</taxon>
        <taxon>Methanococcoides</taxon>
    </lineage>
</organism>